<accession>A4YF03</accession>
<reference key="1">
    <citation type="journal article" date="2008" name="Appl. Environ. Microbiol.">
        <title>The genome sequence of the metal-mobilizing, extremely thermoacidophilic archaeon Metallosphaera sedula provides insights into bioleaching-associated metabolism.</title>
        <authorList>
            <person name="Auernik K.S."/>
            <person name="Maezato Y."/>
            <person name="Blum P.H."/>
            <person name="Kelly R.M."/>
        </authorList>
    </citation>
    <scope>NUCLEOTIDE SEQUENCE [LARGE SCALE GENOMIC DNA]</scope>
    <source>
        <strain>ATCC 51363 / DSM 5348 / JCM 9185 / NBRC 15509 / TH2</strain>
    </source>
</reference>
<name>LEUC_METS5</name>
<protein>
    <recommendedName>
        <fullName evidence="1">3-isopropylmalate dehydratase large subunit</fullName>
        <ecNumber evidence="1">4.2.1.33</ecNumber>
    </recommendedName>
    <alternativeName>
        <fullName evidence="1">Alpha-IPM isomerase</fullName>
        <shortName evidence="1">IPMI</shortName>
    </alternativeName>
    <alternativeName>
        <fullName evidence="1">Isopropylmalate isomerase</fullName>
    </alternativeName>
</protein>
<comment type="function">
    <text evidence="1">Catalyzes the isomerization between 2-isopropylmalate and 3-isopropylmalate, via the formation of 2-isopropylmaleate.</text>
</comment>
<comment type="catalytic activity">
    <reaction evidence="1">
        <text>(2R,3S)-3-isopropylmalate = (2S)-2-isopropylmalate</text>
        <dbReference type="Rhea" id="RHEA:32287"/>
        <dbReference type="ChEBI" id="CHEBI:1178"/>
        <dbReference type="ChEBI" id="CHEBI:35121"/>
        <dbReference type="EC" id="4.2.1.33"/>
    </reaction>
</comment>
<comment type="cofactor">
    <cofactor evidence="1">
        <name>[4Fe-4S] cluster</name>
        <dbReference type="ChEBI" id="CHEBI:49883"/>
    </cofactor>
    <text evidence="1">Binds 1 [4Fe-4S] cluster per subunit.</text>
</comment>
<comment type="pathway">
    <text evidence="1">Amino-acid biosynthesis; L-leucine biosynthesis; L-leucine from 3-methyl-2-oxobutanoate: step 2/4.</text>
</comment>
<comment type="subunit">
    <text evidence="1">Heterodimer of LeuC and LeuD.</text>
</comment>
<comment type="similarity">
    <text evidence="1">Belongs to the aconitase/IPM isomerase family. LeuC type 2 subfamily.</text>
</comment>
<evidence type="ECO:0000255" key="1">
    <source>
        <dbReference type="HAMAP-Rule" id="MF_01027"/>
    </source>
</evidence>
<dbReference type="EC" id="4.2.1.33" evidence="1"/>
<dbReference type="EMBL" id="CP000682">
    <property type="protein sequence ID" value="ABP95005.1"/>
    <property type="molecule type" value="Genomic_DNA"/>
</dbReference>
<dbReference type="RefSeq" id="WP_012020792.1">
    <property type="nucleotide sequence ID" value="NC_009440.1"/>
</dbReference>
<dbReference type="SMR" id="A4YF03"/>
<dbReference type="STRING" id="399549.Msed_0830"/>
<dbReference type="GeneID" id="91755291"/>
<dbReference type="KEGG" id="mse:Msed_0830"/>
<dbReference type="eggNOG" id="arCOG01698">
    <property type="taxonomic scope" value="Archaea"/>
</dbReference>
<dbReference type="HOGENOM" id="CLU_006714_3_4_2"/>
<dbReference type="UniPathway" id="UPA00048">
    <property type="reaction ID" value="UER00071"/>
</dbReference>
<dbReference type="Proteomes" id="UP000000242">
    <property type="component" value="Chromosome"/>
</dbReference>
<dbReference type="GO" id="GO:0003861">
    <property type="term" value="F:3-isopropylmalate dehydratase activity"/>
    <property type="evidence" value="ECO:0007669"/>
    <property type="project" value="UniProtKB-UniRule"/>
</dbReference>
<dbReference type="GO" id="GO:0051539">
    <property type="term" value="F:4 iron, 4 sulfur cluster binding"/>
    <property type="evidence" value="ECO:0007669"/>
    <property type="project" value="UniProtKB-KW"/>
</dbReference>
<dbReference type="GO" id="GO:0046872">
    <property type="term" value="F:metal ion binding"/>
    <property type="evidence" value="ECO:0007669"/>
    <property type="project" value="UniProtKB-KW"/>
</dbReference>
<dbReference type="GO" id="GO:0009098">
    <property type="term" value="P:L-leucine biosynthetic process"/>
    <property type="evidence" value="ECO:0007669"/>
    <property type="project" value="UniProtKB-UniRule"/>
</dbReference>
<dbReference type="CDD" id="cd01583">
    <property type="entry name" value="IPMI"/>
    <property type="match status" value="1"/>
</dbReference>
<dbReference type="Gene3D" id="3.30.499.10">
    <property type="entry name" value="Aconitase, domain 3"/>
    <property type="match status" value="2"/>
</dbReference>
<dbReference type="HAMAP" id="MF_01027">
    <property type="entry name" value="LeuC_type2"/>
    <property type="match status" value="1"/>
</dbReference>
<dbReference type="InterPro" id="IPR015931">
    <property type="entry name" value="Acnase/IPM_dHydase_lsu_aba_1/3"/>
</dbReference>
<dbReference type="InterPro" id="IPR001030">
    <property type="entry name" value="Acoase/IPM_deHydtase_lsu_aba"/>
</dbReference>
<dbReference type="InterPro" id="IPR018136">
    <property type="entry name" value="Aconitase_4Fe-4S_BS"/>
</dbReference>
<dbReference type="InterPro" id="IPR036008">
    <property type="entry name" value="Aconitase_4Fe-4S_dom"/>
</dbReference>
<dbReference type="InterPro" id="IPR011826">
    <property type="entry name" value="HAcnase/IPMdehydase_lsu_prok"/>
</dbReference>
<dbReference type="InterPro" id="IPR006251">
    <property type="entry name" value="Homoacnase/IPMdehydase_lsu"/>
</dbReference>
<dbReference type="InterPro" id="IPR050067">
    <property type="entry name" value="IPM_dehydratase_rel_enz"/>
</dbReference>
<dbReference type="InterPro" id="IPR033941">
    <property type="entry name" value="IPMI_cat"/>
</dbReference>
<dbReference type="NCBIfam" id="TIGR01343">
    <property type="entry name" value="hacA_fam"/>
    <property type="match status" value="1"/>
</dbReference>
<dbReference type="NCBIfam" id="TIGR02086">
    <property type="entry name" value="IPMI_arch"/>
    <property type="match status" value="1"/>
</dbReference>
<dbReference type="NCBIfam" id="NF001614">
    <property type="entry name" value="PRK00402.1"/>
    <property type="match status" value="1"/>
</dbReference>
<dbReference type="PANTHER" id="PTHR43822:SF2">
    <property type="entry name" value="HOMOACONITASE, MITOCHONDRIAL"/>
    <property type="match status" value="1"/>
</dbReference>
<dbReference type="PANTHER" id="PTHR43822">
    <property type="entry name" value="HOMOACONITASE, MITOCHONDRIAL-RELATED"/>
    <property type="match status" value="1"/>
</dbReference>
<dbReference type="Pfam" id="PF00330">
    <property type="entry name" value="Aconitase"/>
    <property type="match status" value="2"/>
</dbReference>
<dbReference type="PRINTS" id="PR00415">
    <property type="entry name" value="ACONITASE"/>
</dbReference>
<dbReference type="SUPFAM" id="SSF53732">
    <property type="entry name" value="Aconitase iron-sulfur domain"/>
    <property type="match status" value="1"/>
</dbReference>
<dbReference type="PROSITE" id="PS01244">
    <property type="entry name" value="ACONITASE_2"/>
    <property type="match status" value="1"/>
</dbReference>
<keyword id="KW-0004">4Fe-4S</keyword>
<keyword id="KW-0028">Amino-acid biosynthesis</keyword>
<keyword id="KW-0100">Branched-chain amino acid biosynthesis</keyword>
<keyword id="KW-0408">Iron</keyword>
<keyword id="KW-0411">Iron-sulfur</keyword>
<keyword id="KW-0432">Leucine biosynthesis</keyword>
<keyword id="KW-0456">Lyase</keyword>
<keyword id="KW-0479">Metal-binding</keyword>
<keyword id="KW-1185">Reference proteome</keyword>
<feature type="chain" id="PRO_1000072951" description="3-isopropylmalate dehydratase large subunit">
    <location>
        <begin position="1"/>
        <end position="415"/>
    </location>
</feature>
<feature type="binding site" evidence="1">
    <location>
        <position position="297"/>
    </location>
    <ligand>
        <name>[4Fe-4S] cluster</name>
        <dbReference type="ChEBI" id="CHEBI:49883"/>
    </ligand>
</feature>
<feature type="binding site" evidence="1">
    <location>
        <position position="355"/>
    </location>
    <ligand>
        <name>[4Fe-4S] cluster</name>
        <dbReference type="ChEBI" id="CHEBI:49883"/>
    </ligand>
</feature>
<feature type="binding site" evidence="1">
    <location>
        <position position="358"/>
    </location>
    <ligand>
        <name>[4Fe-4S] cluster</name>
        <dbReference type="ChEBI" id="CHEBI:49883"/>
    </ligand>
</feature>
<proteinExistence type="inferred from homology"/>
<gene>
    <name evidence="1" type="primary">leuC</name>
    <name type="ordered locus">Msed_0830</name>
</gene>
<sequence length="415" mass="44886">MTGTLTEKILSRASGKTVSPGDVIEAKTDIVAFHDLTGYHVIEVMEKANMMKIFDKTKIVVAFDHLAPPPDVRSAEIQGNIRKFVKEMRLPNFHDINVGILHELLIEQYALPGQVIVAADSHTTTSGAVGAFAQGMGASDVAAAVITGKTWLVVPQPFKVTLKGNPGKWINGKDVALELLGKFKADYFNGMSIEVHVENPKAFPMDYRATVSNMGIEMNADALMFVPDVETKDYIKTMRGKEVELVTPDPGAKYLDEHTIELDKLEPLVAAPYSVDNVKTAREESKVPVDQVYIGSCTNGRLSDFRIASEILKGKKVKTRCIAIPSSYTMFKQAMEMGYIEDLVNAGCVVTYGTCGPCLGGHFGVAGPGEVIVSTSSRNFRGRMGSNEAKVYLSGPSVAAASAATGYITDPRDVQ</sequence>
<organism>
    <name type="scientific">Metallosphaera sedula (strain ATCC 51363 / DSM 5348 / JCM 9185 / NBRC 15509 / TH2)</name>
    <dbReference type="NCBI Taxonomy" id="399549"/>
    <lineage>
        <taxon>Archaea</taxon>
        <taxon>Thermoproteota</taxon>
        <taxon>Thermoprotei</taxon>
        <taxon>Sulfolobales</taxon>
        <taxon>Sulfolobaceae</taxon>
        <taxon>Metallosphaera</taxon>
    </lineage>
</organism>